<name>GUAAB_NATPD</name>
<keyword id="KW-0067">ATP-binding</keyword>
<keyword id="KW-0332">GMP biosynthesis</keyword>
<keyword id="KW-0436">Ligase</keyword>
<keyword id="KW-0547">Nucleotide-binding</keyword>
<keyword id="KW-0658">Purine biosynthesis</keyword>
<keyword id="KW-1185">Reference proteome</keyword>
<gene>
    <name evidence="1" type="primary">guaAB</name>
    <name type="ordered locus">NP_1970A</name>
</gene>
<protein>
    <recommendedName>
        <fullName evidence="1">GMP synthase [glutamine-hydrolyzing] subunit B</fullName>
        <ecNumber evidence="1">6.3.5.2</ecNumber>
    </recommendedName>
    <alternativeName>
        <fullName evidence="1">GMP synthetase</fullName>
    </alternativeName>
</protein>
<evidence type="ECO:0000255" key="1">
    <source>
        <dbReference type="HAMAP-Rule" id="MF_00345"/>
    </source>
</evidence>
<reference key="1">
    <citation type="journal article" date="2005" name="Genome Res.">
        <title>Living with two extremes: conclusions from the genome sequence of Natronomonas pharaonis.</title>
        <authorList>
            <person name="Falb M."/>
            <person name="Pfeiffer F."/>
            <person name="Palm P."/>
            <person name="Rodewald K."/>
            <person name="Hickmann V."/>
            <person name="Tittor J."/>
            <person name="Oesterhelt D."/>
        </authorList>
    </citation>
    <scope>NUCLEOTIDE SEQUENCE [LARGE SCALE GENOMIC DNA]</scope>
    <source>
        <strain>ATCC 35678 / DSM 2160 / CIP 103997 / JCM 8858 / NBRC 14720 / NCIMB 2260 / Gabara</strain>
    </source>
</reference>
<comment type="function">
    <text evidence="1">Catalyzes the synthesis of GMP from XMP.</text>
</comment>
<comment type="catalytic activity">
    <reaction evidence="1">
        <text>XMP + L-glutamine + ATP + H2O = GMP + L-glutamate + AMP + diphosphate + 2 H(+)</text>
        <dbReference type="Rhea" id="RHEA:11680"/>
        <dbReference type="ChEBI" id="CHEBI:15377"/>
        <dbReference type="ChEBI" id="CHEBI:15378"/>
        <dbReference type="ChEBI" id="CHEBI:29985"/>
        <dbReference type="ChEBI" id="CHEBI:30616"/>
        <dbReference type="ChEBI" id="CHEBI:33019"/>
        <dbReference type="ChEBI" id="CHEBI:57464"/>
        <dbReference type="ChEBI" id="CHEBI:58115"/>
        <dbReference type="ChEBI" id="CHEBI:58359"/>
        <dbReference type="ChEBI" id="CHEBI:456215"/>
        <dbReference type="EC" id="6.3.5.2"/>
    </reaction>
</comment>
<comment type="pathway">
    <text evidence="1">Purine metabolism; GMP biosynthesis; GMP from XMP (L-Gln route): step 1/1.</text>
</comment>
<comment type="subunit">
    <text evidence="1">Heterodimer composed of a glutamine amidotransferase subunit (A) and a GMP-binding subunit (B).</text>
</comment>
<feature type="chain" id="PRO_1000048381" description="GMP synthase [glutamine-hydrolyzing] subunit B">
    <location>
        <begin position="1"/>
        <end position="305"/>
    </location>
</feature>
<feature type="domain" description="GMPS ATP-PPase" evidence="1">
    <location>
        <begin position="2"/>
        <end position="185"/>
    </location>
</feature>
<feature type="binding site" evidence="1">
    <location>
        <begin position="29"/>
        <end position="35"/>
    </location>
    <ligand>
        <name>ATP</name>
        <dbReference type="ChEBI" id="CHEBI:30616"/>
    </ligand>
</feature>
<organism>
    <name type="scientific">Natronomonas pharaonis (strain ATCC 35678 / DSM 2160 / CIP 103997 / JCM 8858 / NBRC 14720 / NCIMB 2260 / Gabara)</name>
    <name type="common">Halobacterium pharaonis</name>
    <dbReference type="NCBI Taxonomy" id="348780"/>
    <lineage>
        <taxon>Archaea</taxon>
        <taxon>Methanobacteriati</taxon>
        <taxon>Methanobacteriota</taxon>
        <taxon>Stenosarchaea group</taxon>
        <taxon>Halobacteria</taxon>
        <taxon>Halobacteriales</taxon>
        <taxon>Haloarculaceae</taxon>
        <taxon>Natronomonas</taxon>
    </lineage>
</organism>
<dbReference type="EC" id="6.3.5.2" evidence="1"/>
<dbReference type="EMBL" id="CR936257">
    <property type="protein sequence ID" value="CAI49076.1"/>
    <property type="molecule type" value="Genomic_DNA"/>
</dbReference>
<dbReference type="RefSeq" id="WP_011322706.1">
    <property type="nucleotide sequence ID" value="NC_007426.1"/>
</dbReference>
<dbReference type="SMR" id="Q3IS14"/>
<dbReference type="STRING" id="348780.NP_1970A"/>
<dbReference type="EnsemblBacteria" id="CAI49076">
    <property type="protein sequence ID" value="CAI49076"/>
    <property type="gene ID" value="NP_1970A"/>
</dbReference>
<dbReference type="GeneID" id="3702783"/>
<dbReference type="KEGG" id="nph:NP_1970A"/>
<dbReference type="eggNOG" id="arCOG00085">
    <property type="taxonomic scope" value="Archaea"/>
</dbReference>
<dbReference type="HOGENOM" id="CLU_014340_0_0_2"/>
<dbReference type="OrthoDB" id="33844at2157"/>
<dbReference type="UniPathway" id="UPA00189">
    <property type="reaction ID" value="UER00296"/>
</dbReference>
<dbReference type="Proteomes" id="UP000002698">
    <property type="component" value="Chromosome"/>
</dbReference>
<dbReference type="GO" id="GO:0005829">
    <property type="term" value="C:cytosol"/>
    <property type="evidence" value="ECO:0007669"/>
    <property type="project" value="TreeGrafter"/>
</dbReference>
<dbReference type="GO" id="GO:0005524">
    <property type="term" value="F:ATP binding"/>
    <property type="evidence" value="ECO:0007669"/>
    <property type="project" value="UniProtKB-UniRule"/>
</dbReference>
<dbReference type="GO" id="GO:0003921">
    <property type="term" value="F:GMP synthase activity"/>
    <property type="evidence" value="ECO:0007669"/>
    <property type="project" value="InterPro"/>
</dbReference>
<dbReference type="CDD" id="cd01997">
    <property type="entry name" value="GMP_synthase_C"/>
    <property type="match status" value="1"/>
</dbReference>
<dbReference type="FunFam" id="3.40.50.620:FF:000208">
    <property type="entry name" value="GMP synthase [glutamine-hydrolyzing] subunit B"/>
    <property type="match status" value="1"/>
</dbReference>
<dbReference type="Gene3D" id="3.30.300.10">
    <property type="match status" value="1"/>
</dbReference>
<dbReference type="Gene3D" id="3.40.50.620">
    <property type="entry name" value="HUPs"/>
    <property type="match status" value="1"/>
</dbReference>
<dbReference type="HAMAP" id="MF_00345">
    <property type="entry name" value="GMP_synthase_B"/>
    <property type="match status" value="1"/>
</dbReference>
<dbReference type="InterPro" id="IPR001674">
    <property type="entry name" value="GMP_synth_C"/>
</dbReference>
<dbReference type="InterPro" id="IPR026598">
    <property type="entry name" value="GMP_synthase_B"/>
</dbReference>
<dbReference type="InterPro" id="IPR025777">
    <property type="entry name" value="GMPS_ATP_PPase_dom"/>
</dbReference>
<dbReference type="InterPro" id="IPR022310">
    <property type="entry name" value="NAD/GMP_synthase"/>
</dbReference>
<dbReference type="InterPro" id="IPR014729">
    <property type="entry name" value="Rossmann-like_a/b/a_fold"/>
</dbReference>
<dbReference type="NCBIfam" id="TIGR00884">
    <property type="entry name" value="guaA_Cterm"/>
    <property type="match status" value="1"/>
</dbReference>
<dbReference type="PANTHER" id="PTHR11922:SF2">
    <property type="entry name" value="GMP SYNTHASE [GLUTAMINE-HYDROLYZING]"/>
    <property type="match status" value="1"/>
</dbReference>
<dbReference type="PANTHER" id="PTHR11922">
    <property type="entry name" value="GMP SYNTHASE-RELATED"/>
    <property type="match status" value="1"/>
</dbReference>
<dbReference type="Pfam" id="PF00958">
    <property type="entry name" value="GMP_synt_C"/>
    <property type="match status" value="1"/>
</dbReference>
<dbReference type="Pfam" id="PF02540">
    <property type="entry name" value="NAD_synthase"/>
    <property type="match status" value="1"/>
</dbReference>
<dbReference type="SUPFAM" id="SSF52402">
    <property type="entry name" value="Adenine nucleotide alpha hydrolases-like"/>
    <property type="match status" value="1"/>
</dbReference>
<dbReference type="SUPFAM" id="SSF54810">
    <property type="entry name" value="GMP synthetase C-terminal dimerisation domain"/>
    <property type="match status" value="1"/>
</dbReference>
<dbReference type="PROSITE" id="PS51553">
    <property type="entry name" value="GMPS_ATP_PPASE"/>
    <property type="match status" value="1"/>
</dbReference>
<sequence>MVEPTAFIDEKIAEIADDVGDANAVIALSGGVDSSTAAALAYEAIGDQLTPVYVDTGLMRKGETDQIRDTFDYMDSLRIIDARDRFLDALSGITDPEEKRHAIGEQFIREFETVARDVDADYLVQGTIYPDRIESEGTIKSHHNVGGLPEVVDFEGIVEPMRDLYKDEVREVARELDLESIIAERMPFPGPGLAIRVLGEVTDEKLAVAREANHVVEEELEEYEPWQALAAVLGKATGVKGDNRVHGWVVSVRSVESRDGMTARAQELDWETLQRIQSRITGENENVARVVYDVTHKPPATIEYE</sequence>
<proteinExistence type="inferred from homology"/>
<accession>Q3IS14</accession>